<name>SH3G1_HUMAN</name>
<organism>
    <name type="scientific">Homo sapiens</name>
    <name type="common">Human</name>
    <dbReference type="NCBI Taxonomy" id="9606"/>
    <lineage>
        <taxon>Eukaryota</taxon>
        <taxon>Metazoa</taxon>
        <taxon>Chordata</taxon>
        <taxon>Craniata</taxon>
        <taxon>Vertebrata</taxon>
        <taxon>Euteleostomi</taxon>
        <taxon>Mammalia</taxon>
        <taxon>Eutheria</taxon>
        <taxon>Euarchontoglires</taxon>
        <taxon>Primates</taxon>
        <taxon>Haplorrhini</taxon>
        <taxon>Catarrhini</taxon>
        <taxon>Hominidae</taxon>
        <taxon>Homo</taxon>
    </lineage>
</organism>
<sequence length="368" mass="41490">MSVAGLKKQFYKASQLVSEKVGGAEGTKLDDDFKEMEKKVDVTSKAVTEVLARTIEYLQPNPASRAKLTMLNTVSKIRGQVKNPGYPQSEGLLGECMIRHGKELGGESNFGDALLDAGESMKRLAEVKDSLDIEVKQNFIDPLQNLCEKDLKEIQHHLKKLEGRRLDFDYKKKRQGKIPDEELRQALEKFEESKEVAETSMHNLLETDIEQVSQLSALVDAQLDYHRQAVQILDELAEKLKRRMREASSRPKREYKPKPREPFDLGEPEQSNGGFPCTTAPKIAASSSFRSSDKPIRTPSRSMPPLDQPSCKALYDFEPENDGELGFHEGDVITLTNQIDENWYEGMLDGQSGFFPLSYVEVLVPLPQ</sequence>
<protein>
    <recommendedName>
        <fullName>Endophilin-A2</fullName>
    </recommendedName>
    <alternativeName>
        <fullName>EEN fusion partner of MLL</fullName>
    </alternativeName>
    <alternativeName>
        <fullName>Endophilin-2</fullName>
    </alternativeName>
    <alternativeName>
        <fullName>Extra eleven-nineteen leukemia fusion gene protein</fullName>
        <shortName>EEN</shortName>
    </alternativeName>
    <alternativeName>
        <fullName>SH3 domain protein 2B</fullName>
    </alternativeName>
    <alternativeName>
        <fullName>SH3 domain-containing GRB2-like protein 1</fullName>
    </alternativeName>
</protein>
<comment type="function">
    <text evidence="1">Implicated in endocytosis. May recruit other proteins to membranes with high curvature (By similarity).</text>
</comment>
<comment type="subunit">
    <text evidence="1 7 8 9">Interacts with ARC (By similarity). Interacts with SYNJ1 and DNM1. Interacts with PDCD6IP. Interacts with BIN2.</text>
</comment>
<comment type="interaction">
    <interactant intactId="EBI-697911">
        <id>Q99961</id>
    </interactant>
    <interactant intactId="EBI-1536151">
        <id>O14672</id>
        <label>ADAM10</label>
    </interactant>
    <organismsDiffer>false</organismsDiffer>
    <experiments>2</experiments>
</comment>
<comment type="interaction">
    <interactant intactId="EBI-697911">
        <id>Q99961</id>
    </interactant>
    <interactant intactId="EBI-602762">
        <id>Q07960</id>
        <label>ARHGAP1</label>
    </interactant>
    <organismsDiffer>false</organismsDiffer>
    <experiments>3</experiments>
</comment>
<comment type="interaction">
    <interactant intactId="EBI-697911">
        <id>Q99961</id>
    </interactant>
    <interactant intactId="EBI-9523517">
        <id>P85298-4</id>
        <label>ARHGAP8</label>
    </interactant>
    <organismsDiffer>false</organismsDiffer>
    <experiments>3</experiments>
</comment>
<comment type="interaction">
    <interactant intactId="EBI-697911">
        <id>Q99961</id>
    </interactant>
    <interactant intactId="EBI-723996">
        <id>Q8IVM0</id>
        <label>CCDC50</label>
    </interactant>
    <organismsDiffer>false</organismsDiffer>
    <experiments>3</experiments>
</comment>
<comment type="interaction">
    <interactant intactId="EBI-697911">
        <id>Q99961</id>
    </interactant>
    <interactant intactId="EBI-11522780">
        <id>Q96DZ9-2</id>
        <label>CMTM5</label>
    </interactant>
    <organismsDiffer>false</organismsDiffer>
    <experiments>3</experiments>
</comment>
<comment type="interaction">
    <interactant intactId="EBI-697911">
        <id>Q99961</id>
    </interactant>
    <interactant intactId="EBI-710457">
        <id>Q7L190</id>
        <label>DPPA4</label>
    </interactant>
    <organismsDiffer>false</organismsDiffer>
    <experiments>10</experiments>
</comment>
<comment type="interaction">
    <interactant intactId="EBI-697911">
        <id>Q99961</id>
    </interactant>
    <interactant intactId="EBI-11980989">
        <id>Q5T9C2-3</id>
        <label>EEIG1</label>
    </interactant>
    <organismsDiffer>false</organismsDiffer>
    <experiments>3</experiments>
</comment>
<comment type="interaction">
    <interactant intactId="EBI-697911">
        <id>Q99961</id>
    </interactant>
    <interactant intactId="EBI-10220102">
        <id>B7ZLH0</id>
        <label>FAM22F</label>
    </interactant>
    <organismsDiffer>false</organismsDiffer>
    <experiments>3</experiments>
</comment>
<comment type="interaction">
    <interactant intactId="EBI-697911">
        <id>Q99961</id>
    </interactant>
    <interactant intactId="EBI-746309">
        <id>Q92917</id>
        <label>GPKOW</label>
    </interactant>
    <organismsDiffer>false</organismsDiffer>
    <experiments>8</experiments>
</comment>
<comment type="interaction">
    <interactant intactId="EBI-697911">
        <id>Q99961</id>
    </interactant>
    <interactant intactId="EBI-466029">
        <id>P42858</id>
        <label>HTT</label>
    </interactant>
    <organismsDiffer>false</organismsDiffer>
    <experiments>3</experiments>
</comment>
<comment type="interaction">
    <interactant intactId="EBI-697911">
        <id>Q99961</id>
    </interactant>
    <interactant intactId="EBI-5323863">
        <id>Q5S007</id>
        <label>LRRK2</label>
    </interactant>
    <organismsDiffer>false</organismsDiffer>
    <experiments>3</experiments>
</comment>
<comment type="interaction">
    <interactant intactId="EBI-697911">
        <id>Q99961</id>
    </interactant>
    <interactant intactId="EBI-944295">
        <id>Q969L2</id>
        <label>MAL2</label>
    </interactant>
    <organismsDiffer>false</organismsDiffer>
    <experiments>5</experiments>
</comment>
<comment type="interaction">
    <interactant intactId="EBI-697911">
        <id>Q99961</id>
    </interactant>
    <interactant intactId="EBI-714236">
        <id>Q13330</id>
        <label>MTA1</label>
    </interactant>
    <organismsDiffer>false</organismsDiffer>
    <experiments>3</experiments>
</comment>
<comment type="interaction">
    <interactant intactId="EBI-697911">
        <id>Q99961</id>
    </interactant>
    <interactant intactId="EBI-13360404">
        <id>Q04118</id>
        <label>PRB3</label>
    </interactant>
    <organismsDiffer>false</organismsDiffer>
    <experiments>3</experiments>
</comment>
<comment type="interaction">
    <interactant intactId="EBI-697911">
        <id>Q99961</id>
    </interactant>
    <interactant intactId="EBI-17437404">
        <id>B1AHC3</id>
        <label>PRR5-ARHGAP8</label>
    </interactant>
    <organismsDiffer>false</organismsDiffer>
    <experiments>4</experiments>
</comment>
<comment type="interaction">
    <interactant intactId="EBI-697911">
        <id>Q99961</id>
    </interactant>
    <interactant intactId="EBI-372273">
        <id>P20618</id>
        <label>PSMB1</label>
    </interactant>
    <organismsDiffer>false</organismsDiffer>
    <experiments>3</experiments>
</comment>
<comment type="interaction">
    <interactant intactId="EBI-697911">
        <id>Q99961</id>
    </interactant>
    <interactant intactId="EBI-18304046">
        <id>Q6ZWK4</id>
        <label>RHEX</label>
    </interactant>
    <organismsDiffer>false</organismsDiffer>
    <experiments>3</experiments>
</comment>
<comment type="interaction">
    <interactant intactId="EBI-697911">
        <id>Q99961</id>
    </interactant>
    <interactant intactId="EBI-2695784">
        <id>Q8TAC9</id>
        <label>SCAMP5</label>
    </interactant>
    <organismsDiffer>false</organismsDiffer>
    <experiments>3</experiments>
</comment>
<comment type="interaction">
    <interactant intactId="EBI-697911">
        <id>Q99961</id>
    </interactant>
    <interactant intactId="EBI-747035">
        <id>Q9H788</id>
        <label>SH2D4A</label>
    </interactant>
    <organismsDiffer>false</organismsDiffer>
    <experiments>6</experiments>
</comment>
<comment type="interaction">
    <interactant intactId="EBI-697911">
        <id>Q99961</id>
    </interactant>
    <interactant intactId="EBI-697911">
        <id>Q99961</id>
        <label>SH3GL1</label>
    </interactant>
    <organismsDiffer>false</organismsDiffer>
    <experiments>6</experiments>
</comment>
<comment type="interaction">
    <interactant intactId="EBI-697911">
        <id>Q99961</id>
    </interactant>
    <interactant intactId="EBI-77938">
        <id>Q99962</id>
        <label>SH3GL2</label>
    </interactant>
    <organismsDiffer>false</organismsDiffer>
    <experiments>7</experiments>
</comment>
<comment type="interaction">
    <interactant intactId="EBI-697911">
        <id>Q99961</id>
    </interactant>
    <interactant intactId="EBI-473910">
        <id>Q99963</id>
        <label>SH3GL3</label>
    </interactant>
    <organismsDiffer>false</organismsDiffer>
    <experiments>7</experiments>
</comment>
<comment type="interaction">
    <interactant intactId="EBI-697911">
        <id>Q99961</id>
    </interactant>
    <interactant intactId="EBI-968198">
        <id>O15524</id>
        <label>SOCS1</label>
    </interactant>
    <organismsDiffer>false</organismsDiffer>
    <experiments>3</experiments>
</comment>
<comment type="interaction">
    <interactant intactId="EBI-697911">
        <id>Q99961</id>
    </interactant>
    <interactant intactId="EBI-742688">
        <id>Q9NZD8</id>
        <label>SPG21</label>
    </interactant>
    <organismsDiffer>false</organismsDiffer>
    <experiments>3</experiments>
</comment>
<comment type="interaction">
    <interactant intactId="EBI-697911">
        <id>Q99961</id>
    </interactant>
    <interactant intactId="EBI-2559305">
        <id>A5D8V6</id>
        <label>VPS37C</label>
    </interactant>
    <organismsDiffer>false</organismsDiffer>
    <experiments>3</experiments>
</comment>
<comment type="subcellular location">
    <subcellularLocation>
        <location evidence="1">Cytoplasm</location>
    </subcellularLocation>
    <subcellularLocation>
        <location evidence="1">Early endosome membrane</location>
        <topology evidence="1">Peripheral membrane protein</topology>
    </subcellularLocation>
    <subcellularLocation>
        <location evidence="9">Cell projection</location>
        <location evidence="9">Podosome</location>
    </subcellularLocation>
    <text evidence="1">Associated with postsynaptic endosomes in hippocampal neurons.</text>
</comment>
<comment type="alternative products">
    <event type="alternative splicing"/>
    <isoform>
        <id>Q99961-1</id>
        <name>1</name>
        <sequence type="displayed"/>
    </isoform>
    <isoform>
        <id>Q99961-2</id>
        <name>2</name>
        <sequence type="described" ref="VSP_045837"/>
    </isoform>
    <isoform>
        <id>Q99961-3</id>
        <name>3</name>
        <sequence type="described" ref="VSP_047037"/>
    </isoform>
</comment>
<comment type="tissue specificity">
    <text>Ubiquitous. Higher expression in pancreas, placenta, prostate, testis and uterus.</text>
</comment>
<comment type="domain">
    <text evidence="1">An N-terminal amphipathic helix, the BAR domain and a second amphipathic helix inserted into helix 1 of the BAR domain (N-BAR domain) induce membrane curvature and bind curved membranes.</text>
</comment>
<comment type="disease">
    <text evidence="10">In some cases of acute leukemia, a translocation results in the formation of a KMT2A/MLL1-EEN fusion gene.</text>
</comment>
<comment type="similarity">
    <text evidence="12">Belongs to the endophilin family.</text>
</comment>
<comment type="online information" name="Atlas of Genetics and Cytogenetics in Oncology and Haematology">
    <link uri="https://atlasgeneticsoncology.org/gene/8/EEN"/>
</comment>
<reference key="1">
    <citation type="journal article" date="1997" name="Genomics">
        <title>A novel SH3-containing human gene family preferentially expressed in the central nervous system.</title>
        <authorList>
            <person name="Giachino C."/>
            <person name="Lantelme E."/>
            <person name="Lanzetti L."/>
            <person name="Saccone S."/>
            <person name="Della Valle G."/>
            <person name="Migone N."/>
        </authorList>
    </citation>
    <scope>NUCLEOTIDE SEQUENCE [MRNA] (ISOFORM 1)</scope>
    <source>
        <tissue>Fetal brain</tissue>
    </source>
</reference>
<reference key="2">
    <citation type="journal article" date="1997" name="Proc. Natl. Acad. Sci. U.S.A.">
        <title>EEN encodes for a member of a new family of proteins containing an Src homology 3 domain and is the third gene located on chromosome 19p13 that fuses to MLL in human leukemia.</title>
        <authorList>
            <person name="So C.W."/>
            <person name="Caldas C."/>
            <person name="Liu M.-M."/>
            <person name="Chen S.-J."/>
            <person name="Huang Q.-H."/>
            <person name="Gu L.-J."/>
            <person name="Sham M.H."/>
            <person name="Wiedemann L.M."/>
            <person name="Chan L.C."/>
        </authorList>
    </citation>
    <scope>NUCLEOTIDE SEQUENCE [MRNA] (ISOFORM 1)</scope>
    <scope>CHROMOSOMAL TRANSLOCATION</scope>
    <source>
        <tissue>Fetal brain</tissue>
    </source>
</reference>
<reference key="3">
    <citation type="submission" date="1997-11" db="EMBL/GenBank/DDBJ databases">
        <authorList>
            <person name="So C.W."/>
            <person name="Caldas C."/>
            <person name="Liu M.-M."/>
            <person name="Chen S.-J."/>
            <person name="Huang Q.-H."/>
            <person name="Gu L.-J."/>
            <person name="Sham M.H."/>
            <person name="Wiedemann L.M."/>
            <person name="Chan L.C."/>
        </authorList>
    </citation>
    <scope>SEQUENCE REVISION</scope>
</reference>
<reference key="4">
    <citation type="submission" date="1999-09" db="EMBL/GenBank/DDBJ databases">
        <title>Homo sapiens SH3-containing protein EEN gene.</title>
        <authorList>
            <person name="Chen S."/>
            <person name="Xiong H."/>
            <person name="Dong H."/>
            <person name="Lin W."/>
            <person name="Zhang C."/>
            <person name="Fu G."/>
            <person name="Qi Z."/>
            <person name="Huang G.M."/>
        </authorList>
    </citation>
    <scope>NUCLEOTIDE SEQUENCE [GENOMIC DNA]</scope>
</reference>
<reference key="5">
    <citation type="journal article" date="2004" name="Nat. Genet.">
        <title>Complete sequencing and characterization of 21,243 full-length human cDNAs.</title>
        <authorList>
            <person name="Ota T."/>
            <person name="Suzuki Y."/>
            <person name="Nishikawa T."/>
            <person name="Otsuki T."/>
            <person name="Sugiyama T."/>
            <person name="Irie R."/>
            <person name="Wakamatsu A."/>
            <person name="Hayashi K."/>
            <person name="Sato H."/>
            <person name="Nagai K."/>
            <person name="Kimura K."/>
            <person name="Makita H."/>
            <person name="Sekine M."/>
            <person name="Obayashi M."/>
            <person name="Nishi T."/>
            <person name="Shibahara T."/>
            <person name="Tanaka T."/>
            <person name="Ishii S."/>
            <person name="Yamamoto J."/>
            <person name="Saito K."/>
            <person name="Kawai Y."/>
            <person name="Isono Y."/>
            <person name="Nakamura Y."/>
            <person name="Nagahari K."/>
            <person name="Murakami K."/>
            <person name="Yasuda T."/>
            <person name="Iwayanagi T."/>
            <person name="Wagatsuma M."/>
            <person name="Shiratori A."/>
            <person name="Sudo H."/>
            <person name="Hosoiri T."/>
            <person name="Kaku Y."/>
            <person name="Kodaira H."/>
            <person name="Kondo H."/>
            <person name="Sugawara M."/>
            <person name="Takahashi M."/>
            <person name="Kanda K."/>
            <person name="Yokoi T."/>
            <person name="Furuya T."/>
            <person name="Kikkawa E."/>
            <person name="Omura Y."/>
            <person name="Abe K."/>
            <person name="Kamihara K."/>
            <person name="Katsuta N."/>
            <person name="Sato K."/>
            <person name="Tanikawa M."/>
            <person name="Yamazaki M."/>
            <person name="Ninomiya K."/>
            <person name="Ishibashi T."/>
            <person name="Yamashita H."/>
            <person name="Murakawa K."/>
            <person name="Fujimori K."/>
            <person name="Tanai H."/>
            <person name="Kimata M."/>
            <person name="Watanabe M."/>
            <person name="Hiraoka S."/>
            <person name="Chiba Y."/>
            <person name="Ishida S."/>
            <person name="Ono Y."/>
            <person name="Takiguchi S."/>
            <person name="Watanabe S."/>
            <person name="Yosida M."/>
            <person name="Hotuta T."/>
            <person name="Kusano J."/>
            <person name="Kanehori K."/>
            <person name="Takahashi-Fujii A."/>
            <person name="Hara H."/>
            <person name="Tanase T.-O."/>
            <person name="Nomura Y."/>
            <person name="Togiya S."/>
            <person name="Komai F."/>
            <person name="Hara R."/>
            <person name="Takeuchi K."/>
            <person name="Arita M."/>
            <person name="Imose N."/>
            <person name="Musashino K."/>
            <person name="Yuuki H."/>
            <person name="Oshima A."/>
            <person name="Sasaki N."/>
            <person name="Aotsuka S."/>
            <person name="Yoshikawa Y."/>
            <person name="Matsunawa H."/>
            <person name="Ichihara T."/>
            <person name="Shiohata N."/>
            <person name="Sano S."/>
            <person name="Moriya S."/>
            <person name="Momiyama H."/>
            <person name="Satoh N."/>
            <person name="Takami S."/>
            <person name="Terashima Y."/>
            <person name="Suzuki O."/>
            <person name="Nakagawa S."/>
            <person name="Senoh A."/>
            <person name="Mizoguchi H."/>
            <person name="Goto Y."/>
            <person name="Shimizu F."/>
            <person name="Wakebe H."/>
            <person name="Hishigaki H."/>
            <person name="Watanabe T."/>
            <person name="Sugiyama A."/>
            <person name="Takemoto M."/>
            <person name="Kawakami B."/>
            <person name="Yamazaki M."/>
            <person name="Watanabe K."/>
            <person name="Kumagai A."/>
            <person name="Itakura S."/>
            <person name="Fukuzumi Y."/>
            <person name="Fujimori Y."/>
            <person name="Komiyama M."/>
            <person name="Tashiro H."/>
            <person name="Tanigami A."/>
            <person name="Fujiwara T."/>
            <person name="Ono T."/>
            <person name="Yamada K."/>
            <person name="Fujii Y."/>
            <person name="Ozaki K."/>
            <person name="Hirao M."/>
            <person name="Ohmori Y."/>
            <person name="Kawabata A."/>
            <person name="Hikiji T."/>
            <person name="Kobatake N."/>
            <person name="Inagaki H."/>
            <person name="Ikema Y."/>
            <person name="Okamoto S."/>
            <person name="Okitani R."/>
            <person name="Kawakami T."/>
            <person name="Noguchi S."/>
            <person name="Itoh T."/>
            <person name="Shigeta K."/>
            <person name="Senba T."/>
            <person name="Matsumura K."/>
            <person name="Nakajima Y."/>
            <person name="Mizuno T."/>
            <person name="Morinaga M."/>
            <person name="Sasaki M."/>
            <person name="Togashi T."/>
            <person name="Oyama M."/>
            <person name="Hata H."/>
            <person name="Watanabe M."/>
            <person name="Komatsu T."/>
            <person name="Mizushima-Sugano J."/>
            <person name="Satoh T."/>
            <person name="Shirai Y."/>
            <person name="Takahashi Y."/>
            <person name="Nakagawa K."/>
            <person name="Okumura K."/>
            <person name="Nagase T."/>
            <person name="Nomura N."/>
            <person name="Kikuchi H."/>
            <person name="Masuho Y."/>
            <person name="Yamashita R."/>
            <person name="Nakai K."/>
            <person name="Yada T."/>
            <person name="Nakamura Y."/>
            <person name="Ohara O."/>
            <person name="Isogai T."/>
            <person name="Sugano S."/>
        </authorList>
    </citation>
    <scope>NUCLEOTIDE SEQUENCE [LARGE SCALE MRNA] (ISOFORMS 2 AND 3)</scope>
</reference>
<reference key="6">
    <citation type="journal article" date="2004" name="Nature">
        <title>The DNA sequence and biology of human chromosome 19.</title>
        <authorList>
            <person name="Grimwood J."/>
            <person name="Gordon L.A."/>
            <person name="Olsen A.S."/>
            <person name="Terry A."/>
            <person name="Schmutz J."/>
            <person name="Lamerdin J.E."/>
            <person name="Hellsten U."/>
            <person name="Goodstein D."/>
            <person name="Couronne O."/>
            <person name="Tran-Gyamfi M."/>
            <person name="Aerts A."/>
            <person name="Altherr M."/>
            <person name="Ashworth L."/>
            <person name="Bajorek E."/>
            <person name="Black S."/>
            <person name="Branscomb E."/>
            <person name="Caenepeel S."/>
            <person name="Carrano A.V."/>
            <person name="Caoile C."/>
            <person name="Chan Y.M."/>
            <person name="Christensen M."/>
            <person name="Cleland C.A."/>
            <person name="Copeland A."/>
            <person name="Dalin E."/>
            <person name="Dehal P."/>
            <person name="Denys M."/>
            <person name="Detter J.C."/>
            <person name="Escobar J."/>
            <person name="Flowers D."/>
            <person name="Fotopulos D."/>
            <person name="Garcia C."/>
            <person name="Georgescu A.M."/>
            <person name="Glavina T."/>
            <person name="Gomez M."/>
            <person name="Gonzales E."/>
            <person name="Groza M."/>
            <person name="Hammon N."/>
            <person name="Hawkins T."/>
            <person name="Haydu L."/>
            <person name="Ho I."/>
            <person name="Huang W."/>
            <person name="Israni S."/>
            <person name="Jett J."/>
            <person name="Kadner K."/>
            <person name="Kimball H."/>
            <person name="Kobayashi A."/>
            <person name="Larionov V."/>
            <person name="Leem S.-H."/>
            <person name="Lopez F."/>
            <person name="Lou Y."/>
            <person name="Lowry S."/>
            <person name="Malfatti S."/>
            <person name="Martinez D."/>
            <person name="McCready P.M."/>
            <person name="Medina C."/>
            <person name="Morgan J."/>
            <person name="Nelson K."/>
            <person name="Nolan M."/>
            <person name="Ovcharenko I."/>
            <person name="Pitluck S."/>
            <person name="Pollard M."/>
            <person name="Popkie A.P."/>
            <person name="Predki P."/>
            <person name="Quan G."/>
            <person name="Ramirez L."/>
            <person name="Rash S."/>
            <person name="Retterer J."/>
            <person name="Rodriguez A."/>
            <person name="Rogers S."/>
            <person name="Salamov A."/>
            <person name="Salazar A."/>
            <person name="She X."/>
            <person name="Smith D."/>
            <person name="Slezak T."/>
            <person name="Solovyev V."/>
            <person name="Thayer N."/>
            <person name="Tice H."/>
            <person name="Tsai M."/>
            <person name="Ustaszewska A."/>
            <person name="Vo N."/>
            <person name="Wagner M."/>
            <person name="Wheeler J."/>
            <person name="Wu K."/>
            <person name="Xie G."/>
            <person name="Yang J."/>
            <person name="Dubchak I."/>
            <person name="Furey T.S."/>
            <person name="DeJong P."/>
            <person name="Dickson M."/>
            <person name="Gordon D."/>
            <person name="Eichler E.E."/>
            <person name="Pennacchio L.A."/>
            <person name="Richardson P."/>
            <person name="Stubbs L."/>
            <person name="Rokhsar D.S."/>
            <person name="Myers R.M."/>
            <person name="Rubin E.M."/>
            <person name="Lucas S.M."/>
        </authorList>
    </citation>
    <scope>NUCLEOTIDE SEQUENCE [LARGE SCALE GENOMIC DNA]</scope>
</reference>
<reference key="7">
    <citation type="journal article" date="2004" name="Genome Res.">
        <title>The status, quality, and expansion of the NIH full-length cDNA project: the Mammalian Gene Collection (MGC).</title>
        <authorList>
            <consortium name="The MGC Project Team"/>
        </authorList>
    </citation>
    <scope>NUCLEOTIDE SEQUENCE [LARGE SCALE MRNA] (ISOFORM 1)</scope>
    <source>
        <tissue>Cervix</tissue>
    </source>
</reference>
<reference key="8">
    <citation type="journal article" date="1999" name="J. Biol. Chem.">
        <title>The SH3 domains of endophilin and amphiphysin bind to the proline-rich region of synaptojanin 1 at distinct sites that display an unconventional binding specificity.</title>
        <authorList>
            <person name="Cestra G."/>
            <person name="Castagnoli L."/>
            <person name="Dente L."/>
            <person name="Minenkova O."/>
            <person name="Petrelli A."/>
            <person name="Migone N."/>
            <person name="Hoffmueller U."/>
            <person name="Schneider-Mergener J."/>
            <person name="Cesareni G."/>
        </authorList>
    </citation>
    <scope>INTERACTION WITH SYNJ1</scope>
</reference>
<reference key="9">
    <citation type="journal article" date="2007" name="Cell">
        <title>Structural and biochemical studies of ALIX/AIP1 and its role in retrovirus budding.</title>
        <authorList>
            <person name="Fisher R.D."/>
            <person name="Chung H.Y."/>
            <person name="Zhai Q."/>
            <person name="Robinson H."/>
            <person name="Sundquist W.I."/>
            <person name="Hill C.P."/>
        </authorList>
    </citation>
    <scope>INTERACTION WITH PDCD6IP</scope>
</reference>
<reference key="10">
    <citation type="journal article" date="2008" name="J. Proteome Res.">
        <title>Phosphoproteome of resting human platelets.</title>
        <authorList>
            <person name="Zahedi R.P."/>
            <person name="Lewandrowski U."/>
            <person name="Wiesner J."/>
            <person name="Wortelkamp S."/>
            <person name="Moebius J."/>
            <person name="Schuetz C."/>
            <person name="Walter U."/>
            <person name="Gambaryan S."/>
            <person name="Sickmann A."/>
        </authorList>
    </citation>
    <scope>IDENTIFICATION BY MASS SPECTROMETRY [LARGE SCALE ANALYSIS]</scope>
    <source>
        <tissue>Platelet</tissue>
    </source>
</reference>
<reference key="11">
    <citation type="journal article" date="2008" name="Proc. Natl. Acad. Sci. U.S.A.">
        <title>A quantitative atlas of mitotic phosphorylation.</title>
        <authorList>
            <person name="Dephoure N."/>
            <person name="Zhou C."/>
            <person name="Villen J."/>
            <person name="Beausoleil S.A."/>
            <person name="Bakalarski C.E."/>
            <person name="Elledge S.J."/>
            <person name="Gygi S.P."/>
        </authorList>
    </citation>
    <scope>PHOSPHORYLATION [LARGE SCALE ANALYSIS] AT SER-288</scope>
    <scope>IDENTIFICATION BY MASS SPECTROMETRY [LARGE SCALE ANALYSIS]</scope>
    <source>
        <tissue>Cervix carcinoma</tissue>
    </source>
</reference>
<reference key="12">
    <citation type="journal article" date="2009" name="Anal. Chem.">
        <title>Lys-N and trypsin cover complementary parts of the phosphoproteome in a refined SCX-based approach.</title>
        <authorList>
            <person name="Gauci S."/>
            <person name="Helbig A.O."/>
            <person name="Slijper M."/>
            <person name="Krijgsveld J."/>
            <person name="Heck A.J."/>
            <person name="Mohammed S."/>
        </authorList>
    </citation>
    <scope>IDENTIFICATION BY MASS SPECTROMETRY [LARGE SCALE ANALYSIS]</scope>
</reference>
<reference key="13">
    <citation type="journal article" date="2010" name="Sci. Signal.">
        <title>Quantitative phosphoproteomics reveals widespread full phosphorylation site occupancy during mitosis.</title>
        <authorList>
            <person name="Olsen J.V."/>
            <person name="Vermeulen M."/>
            <person name="Santamaria A."/>
            <person name="Kumar C."/>
            <person name="Miller M.L."/>
            <person name="Jensen L.J."/>
            <person name="Gnad F."/>
            <person name="Cox J."/>
            <person name="Jensen T.S."/>
            <person name="Nigg E.A."/>
            <person name="Brunak S."/>
            <person name="Mann M."/>
        </authorList>
    </citation>
    <scope>PHOSPHORYLATION [LARGE SCALE ANALYSIS] AT SER-288</scope>
    <scope>IDENTIFICATION BY MASS SPECTROMETRY [LARGE SCALE ANALYSIS]</scope>
    <source>
        <tissue>Cervix carcinoma</tissue>
    </source>
</reference>
<reference key="14">
    <citation type="journal article" date="2011" name="BMC Syst. Biol.">
        <title>Initial characterization of the human central proteome.</title>
        <authorList>
            <person name="Burkard T.R."/>
            <person name="Planyavsky M."/>
            <person name="Kaupe I."/>
            <person name="Breitwieser F.P."/>
            <person name="Buerckstuemmer T."/>
            <person name="Bennett K.L."/>
            <person name="Superti-Furga G."/>
            <person name="Colinge J."/>
        </authorList>
    </citation>
    <scope>IDENTIFICATION BY MASS SPECTROMETRY [LARGE SCALE ANALYSIS]</scope>
</reference>
<reference key="15">
    <citation type="journal article" date="2011" name="Sci. Signal.">
        <title>System-wide temporal characterization of the proteome and phosphoproteome of human embryonic stem cell differentiation.</title>
        <authorList>
            <person name="Rigbolt K.T."/>
            <person name="Prokhorova T.A."/>
            <person name="Akimov V."/>
            <person name="Henningsen J."/>
            <person name="Johansen P.T."/>
            <person name="Kratchmarova I."/>
            <person name="Kassem M."/>
            <person name="Mann M."/>
            <person name="Olsen J.V."/>
            <person name="Blagoev B."/>
        </authorList>
    </citation>
    <scope>PHOSPHORYLATION [LARGE SCALE ANALYSIS] AT SER-288</scope>
    <scope>IDENTIFICATION BY MASS SPECTROMETRY [LARGE SCALE ANALYSIS]</scope>
</reference>
<reference key="16">
    <citation type="journal article" date="2012" name="PLoS ONE">
        <title>Bin2 is a membrane sculpting N-BAR protein that influences leucocyte podosomes, motility and phagocytosis.</title>
        <authorList>
            <person name="Sanchez-Barrena M.J."/>
            <person name="Vallis Y."/>
            <person name="Clatworthy M.R."/>
            <person name="Doherty G.J."/>
            <person name="Veprintsev D.B."/>
            <person name="Evans P.R."/>
            <person name="McMahon H.T."/>
        </authorList>
    </citation>
    <scope>INTERACTION WITH BIN2</scope>
    <scope>SUBCELLULAR LOCATION</scope>
</reference>
<reference key="17">
    <citation type="journal article" date="2013" name="J. Proteome Res.">
        <title>Toward a comprehensive characterization of a human cancer cell phosphoproteome.</title>
        <authorList>
            <person name="Zhou H."/>
            <person name="Di Palma S."/>
            <person name="Preisinger C."/>
            <person name="Peng M."/>
            <person name="Polat A.N."/>
            <person name="Heck A.J."/>
            <person name="Mohammed S."/>
        </authorList>
    </citation>
    <scope>PHOSPHORYLATION [LARGE SCALE ANALYSIS] AT SER-288; SER-292 AND THR-298</scope>
    <scope>IDENTIFICATION BY MASS SPECTROMETRY [LARGE SCALE ANALYSIS]</scope>
    <source>
        <tissue>Cervix carcinoma</tissue>
        <tissue>Erythroleukemia</tissue>
    </source>
</reference>
<reference key="18">
    <citation type="journal article" date="2014" name="J. Proteomics">
        <title>An enzyme assisted RP-RPLC approach for in-depth analysis of human liver phosphoproteome.</title>
        <authorList>
            <person name="Bian Y."/>
            <person name="Song C."/>
            <person name="Cheng K."/>
            <person name="Dong M."/>
            <person name="Wang F."/>
            <person name="Huang J."/>
            <person name="Sun D."/>
            <person name="Wang L."/>
            <person name="Ye M."/>
            <person name="Zou H."/>
        </authorList>
    </citation>
    <scope>PHOSPHORYLATION [LARGE SCALE ANALYSIS] AT SER-288</scope>
    <scope>IDENTIFICATION BY MASS SPECTROMETRY [LARGE SCALE ANALYSIS]</scope>
    <source>
        <tissue>Liver</tissue>
    </source>
</reference>
<keyword id="KW-0025">Alternative splicing</keyword>
<keyword id="KW-0965">Cell junction</keyword>
<keyword id="KW-0966">Cell projection</keyword>
<keyword id="KW-0160">Chromosomal rearrangement</keyword>
<keyword id="KW-0175">Coiled coil</keyword>
<keyword id="KW-0963">Cytoplasm</keyword>
<keyword id="KW-0254">Endocytosis</keyword>
<keyword id="KW-0967">Endosome</keyword>
<keyword id="KW-0446">Lipid-binding</keyword>
<keyword id="KW-0472">Membrane</keyword>
<keyword id="KW-0597">Phosphoprotein</keyword>
<keyword id="KW-1267">Proteomics identification</keyword>
<keyword id="KW-0656">Proto-oncogene</keyword>
<keyword id="KW-1185">Reference proteome</keyword>
<keyword id="KW-0728">SH3 domain</keyword>
<dbReference type="EMBL" id="X99656">
    <property type="protein sequence ID" value="CAA67970.1"/>
    <property type="molecule type" value="mRNA"/>
</dbReference>
<dbReference type="EMBL" id="U65999">
    <property type="protein sequence ID" value="AAB86800.1"/>
    <property type="molecule type" value="mRNA"/>
</dbReference>
<dbReference type="EMBL" id="AF190465">
    <property type="protein sequence ID" value="AAF04290.1"/>
    <property type="molecule type" value="Genomic_DNA"/>
</dbReference>
<dbReference type="EMBL" id="AK299166">
    <property type="protein sequence ID" value="BAG61213.1"/>
    <property type="molecule type" value="mRNA"/>
</dbReference>
<dbReference type="EMBL" id="AK097616">
    <property type="status" value="NOT_ANNOTATED_CDS"/>
    <property type="molecule type" value="mRNA"/>
</dbReference>
<dbReference type="EMBL" id="AC007292">
    <property type="status" value="NOT_ANNOTATED_CDS"/>
    <property type="molecule type" value="Genomic_DNA"/>
</dbReference>
<dbReference type="EMBL" id="AC011498">
    <property type="status" value="NOT_ANNOTATED_CDS"/>
    <property type="molecule type" value="Genomic_DNA"/>
</dbReference>
<dbReference type="EMBL" id="BC001270">
    <property type="protein sequence ID" value="AAH01270.1"/>
    <property type="molecule type" value="mRNA"/>
</dbReference>
<dbReference type="CCDS" id="CCDS32874.1">
    <molecule id="Q99961-1"/>
</dbReference>
<dbReference type="CCDS" id="CCDS56076.1">
    <molecule id="Q99961-2"/>
</dbReference>
<dbReference type="CCDS" id="CCDS59335.1">
    <molecule id="Q99961-3"/>
</dbReference>
<dbReference type="RefSeq" id="NP_001186872.1">
    <molecule id="Q99961-2"/>
    <property type="nucleotide sequence ID" value="NM_001199943.2"/>
</dbReference>
<dbReference type="RefSeq" id="NP_001186873.1">
    <molecule id="Q99961-3"/>
    <property type="nucleotide sequence ID" value="NM_001199944.2"/>
</dbReference>
<dbReference type="RefSeq" id="NP_003016.1">
    <molecule id="Q99961-1"/>
    <property type="nucleotide sequence ID" value="NM_003025.4"/>
</dbReference>
<dbReference type="SMR" id="Q99961"/>
<dbReference type="BioGRID" id="112352">
    <property type="interactions" value="181"/>
</dbReference>
<dbReference type="DIP" id="DIP-29452N"/>
<dbReference type="FunCoup" id="Q99961">
    <property type="interactions" value="2013"/>
</dbReference>
<dbReference type="IntAct" id="Q99961">
    <property type="interactions" value="93"/>
</dbReference>
<dbReference type="MINT" id="Q99961"/>
<dbReference type="STRING" id="9606.ENSP00000269886"/>
<dbReference type="GlyGen" id="Q99961">
    <property type="glycosylation" value="2 sites, 1 O-linked glycan (2 sites)"/>
</dbReference>
<dbReference type="iPTMnet" id="Q99961"/>
<dbReference type="MetOSite" id="Q99961"/>
<dbReference type="PhosphoSitePlus" id="Q99961"/>
<dbReference type="BioMuta" id="SH3GL1"/>
<dbReference type="DMDM" id="12643797"/>
<dbReference type="OGP" id="Q99961"/>
<dbReference type="jPOST" id="Q99961"/>
<dbReference type="MassIVE" id="Q99961"/>
<dbReference type="PaxDb" id="9606-ENSP00000269886"/>
<dbReference type="PeptideAtlas" id="Q99961"/>
<dbReference type="ProteomicsDB" id="18733"/>
<dbReference type="ProteomicsDB" id="78545">
    <molecule id="Q99961-1"/>
</dbReference>
<dbReference type="Pumba" id="Q99961"/>
<dbReference type="Antibodypedia" id="11454">
    <property type="antibodies" value="391 antibodies from 34 providers"/>
</dbReference>
<dbReference type="DNASU" id="6455"/>
<dbReference type="Ensembl" id="ENST00000269886.7">
    <molecule id="Q99961-1"/>
    <property type="protein sequence ID" value="ENSP00000269886.2"/>
    <property type="gene ID" value="ENSG00000141985.9"/>
</dbReference>
<dbReference type="Ensembl" id="ENST00000417295.6">
    <molecule id="Q99961-2"/>
    <property type="protein sequence ID" value="ENSP00000404568.2"/>
    <property type="gene ID" value="ENSG00000141985.9"/>
</dbReference>
<dbReference type="Ensembl" id="ENST00000598564.5">
    <molecule id="Q99961-3"/>
    <property type="protein sequence ID" value="ENSP00000470792.1"/>
    <property type="gene ID" value="ENSG00000141985.9"/>
</dbReference>
<dbReference type="GeneID" id="6455"/>
<dbReference type="KEGG" id="hsa:6455"/>
<dbReference type="MANE-Select" id="ENST00000269886.7">
    <property type="protein sequence ID" value="ENSP00000269886.2"/>
    <property type="RefSeq nucleotide sequence ID" value="NM_003025.4"/>
    <property type="RefSeq protein sequence ID" value="NP_003016.1"/>
</dbReference>
<dbReference type="UCSC" id="uc002maj.4">
    <molecule id="Q99961-1"/>
    <property type="organism name" value="human"/>
</dbReference>
<dbReference type="AGR" id="HGNC:10830"/>
<dbReference type="CTD" id="6455"/>
<dbReference type="DisGeNET" id="6455"/>
<dbReference type="GeneCards" id="SH3GL1"/>
<dbReference type="HGNC" id="HGNC:10830">
    <property type="gene designation" value="SH3GL1"/>
</dbReference>
<dbReference type="HPA" id="ENSG00000141985">
    <property type="expression patterns" value="Low tissue specificity"/>
</dbReference>
<dbReference type="MalaCards" id="SH3GL1"/>
<dbReference type="MIM" id="601768">
    <property type="type" value="gene"/>
</dbReference>
<dbReference type="neXtProt" id="NX_Q99961"/>
<dbReference type="OpenTargets" id="ENSG00000141985"/>
<dbReference type="PharmGKB" id="PA35736"/>
<dbReference type="VEuPathDB" id="HostDB:ENSG00000141985"/>
<dbReference type="eggNOG" id="KOG1118">
    <property type="taxonomic scope" value="Eukaryota"/>
</dbReference>
<dbReference type="GeneTree" id="ENSGT00940000154737"/>
<dbReference type="HOGENOM" id="CLU_047887_0_0_1"/>
<dbReference type="InParanoid" id="Q99961"/>
<dbReference type="OMA" id="MFPANYC"/>
<dbReference type="OrthoDB" id="443981at2759"/>
<dbReference type="PAN-GO" id="Q99961">
    <property type="GO annotations" value="4 GO annotations based on evolutionary models"/>
</dbReference>
<dbReference type="PhylomeDB" id="Q99961"/>
<dbReference type="TreeFam" id="TF313281"/>
<dbReference type="PathwayCommons" id="Q99961"/>
<dbReference type="Reactome" id="R-HSA-182971">
    <property type="pathway name" value="EGFR downregulation"/>
</dbReference>
<dbReference type="Reactome" id="R-HSA-6807004">
    <property type="pathway name" value="Negative regulation of MET activity"/>
</dbReference>
<dbReference type="Reactome" id="R-HSA-8856825">
    <property type="pathway name" value="Cargo recognition for clathrin-mediated endocytosis"/>
</dbReference>
<dbReference type="Reactome" id="R-HSA-8856828">
    <property type="pathway name" value="Clathrin-mediated endocytosis"/>
</dbReference>
<dbReference type="Reactome" id="R-HSA-8875360">
    <property type="pathway name" value="InlB-mediated entry of Listeria monocytogenes into host cell"/>
</dbReference>
<dbReference type="SignaLink" id="Q99961"/>
<dbReference type="SIGNOR" id="Q99961"/>
<dbReference type="BioGRID-ORCS" id="6455">
    <property type="hits" value="51 hits in 1164 CRISPR screens"/>
</dbReference>
<dbReference type="CD-CODE" id="91857CE7">
    <property type="entry name" value="Nucleolus"/>
</dbReference>
<dbReference type="CD-CODE" id="FB4E32DD">
    <property type="entry name" value="Presynaptic clusters and postsynaptic densities"/>
</dbReference>
<dbReference type="ChiTaRS" id="SH3GL1">
    <property type="organism name" value="human"/>
</dbReference>
<dbReference type="GeneWiki" id="SH3GL1"/>
<dbReference type="GenomeRNAi" id="6455"/>
<dbReference type="Pharos" id="Q99961">
    <property type="development level" value="Tbio"/>
</dbReference>
<dbReference type="PRO" id="PR:Q99961"/>
<dbReference type="Proteomes" id="UP000005640">
    <property type="component" value="Chromosome 19"/>
</dbReference>
<dbReference type="RNAct" id="Q99961">
    <property type="molecule type" value="protein"/>
</dbReference>
<dbReference type="Bgee" id="ENSG00000141985">
    <property type="expression patterns" value="Expressed in lower esophagus mucosa and 197 other cell types or tissues"/>
</dbReference>
<dbReference type="ExpressionAtlas" id="Q99961">
    <property type="expression patterns" value="baseline and differential"/>
</dbReference>
<dbReference type="GO" id="GO:0070161">
    <property type="term" value="C:anchoring junction"/>
    <property type="evidence" value="ECO:0007669"/>
    <property type="project" value="UniProtKB-KW"/>
</dbReference>
<dbReference type="GO" id="GO:0042995">
    <property type="term" value="C:cell projection"/>
    <property type="evidence" value="ECO:0007669"/>
    <property type="project" value="UniProtKB-KW"/>
</dbReference>
<dbReference type="GO" id="GO:0005737">
    <property type="term" value="C:cytoplasm"/>
    <property type="evidence" value="ECO:0000314"/>
    <property type="project" value="BHF-UCL"/>
</dbReference>
<dbReference type="GO" id="GO:0005829">
    <property type="term" value="C:cytosol"/>
    <property type="evidence" value="ECO:0000314"/>
    <property type="project" value="HPA"/>
</dbReference>
<dbReference type="GO" id="GO:0031901">
    <property type="term" value="C:early endosome membrane"/>
    <property type="evidence" value="ECO:0007669"/>
    <property type="project" value="UniProtKB-SubCell"/>
</dbReference>
<dbReference type="GO" id="GO:0098978">
    <property type="term" value="C:glutamatergic synapse"/>
    <property type="evidence" value="ECO:0000318"/>
    <property type="project" value="GO_Central"/>
</dbReference>
<dbReference type="GO" id="GO:0002102">
    <property type="term" value="C:podosome"/>
    <property type="evidence" value="ECO:0007669"/>
    <property type="project" value="UniProtKB-SubCell"/>
</dbReference>
<dbReference type="GO" id="GO:0098793">
    <property type="term" value="C:presynapse"/>
    <property type="evidence" value="ECO:0000318"/>
    <property type="project" value="GO_Central"/>
</dbReference>
<dbReference type="GO" id="GO:0045296">
    <property type="term" value="F:cadherin binding"/>
    <property type="evidence" value="ECO:0007005"/>
    <property type="project" value="BHF-UCL"/>
</dbReference>
<dbReference type="GO" id="GO:0042802">
    <property type="term" value="F:identical protein binding"/>
    <property type="evidence" value="ECO:0000353"/>
    <property type="project" value="IntAct"/>
</dbReference>
<dbReference type="GO" id="GO:0008289">
    <property type="term" value="F:lipid binding"/>
    <property type="evidence" value="ECO:0007669"/>
    <property type="project" value="UniProtKB-KW"/>
</dbReference>
<dbReference type="GO" id="GO:0007417">
    <property type="term" value="P:central nervous system development"/>
    <property type="evidence" value="ECO:0000304"/>
    <property type="project" value="ProtInc"/>
</dbReference>
<dbReference type="GO" id="GO:0006897">
    <property type="term" value="P:endocytosis"/>
    <property type="evidence" value="ECO:0007669"/>
    <property type="project" value="UniProtKB-KW"/>
</dbReference>
<dbReference type="GO" id="GO:0007165">
    <property type="term" value="P:signal transduction"/>
    <property type="evidence" value="ECO:0000304"/>
    <property type="project" value="ProtInc"/>
</dbReference>
<dbReference type="CDD" id="cd07592">
    <property type="entry name" value="BAR_Endophilin_A"/>
    <property type="match status" value="1"/>
</dbReference>
<dbReference type="CDD" id="cd11803">
    <property type="entry name" value="SH3_Endophilin_A"/>
    <property type="match status" value="1"/>
</dbReference>
<dbReference type="FunFam" id="2.30.30.40:FF:000053">
    <property type="entry name" value="endophilin-A1 isoform X2"/>
    <property type="match status" value="1"/>
</dbReference>
<dbReference type="FunFam" id="1.20.1270.60:FF:000021">
    <property type="entry name" value="Endophilin-A2 isoform 1"/>
    <property type="match status" value="1"/>
</dbReference>
<dbReference type="Gene3D" id="1.20.1270.60">
    <property type="entry name" value="Arfaptin homology (AH) domain/BAR domain"/>
    <property type="match status" value="1"/>
</dbReference>
<dbReference type="Gene3D" id="2.30.30.40">
    <property type="entry name" value="SH3 Domains"/>
    <property type="match status" value="1"/>
</dbReference>
<dbReference type="InterPro" id="IPR027267">
    <property type="entry name" value="AH/BAR_dom_sf"/>
</dbReference>
<dbReference type="InterPro" id="IPR004148">
    <property type="entry name" value="BAR_dom"/>
</dbReference>
<dbReference type="InterPro" id="IPR035824">
    <property type="entry name" value="Endophilin_A_SH3"/>
</dbReference>
<dbReference type="InterPro" id="IPR050384">
    <property type="entry name" value="Endophilin_SH3RF"/>
</dbReference>
<dbReference type="InterPro" id="IPR036028">
    <property type="entry name" value="SH3-like_dom_sf"/>
</dbReference>
<dbReference type="InterPro" id="IPR001452">
    <property type="entry name" value="SH3_domain"/>
</dbReference>
<dbReference type="PANTHER" id="PTHR14167:SF63">
    <property type="entry name" value="ENDOPHILIN-A2"/>
    <property type="match status" value="1"/>
</dbReference>
<dbReference type="PANTHER" id="PTHR14167">
    <property type="entry name" value="SH3 DOMAIN-CONTAINING"/>
    <property type="match status" value="1"/>
</dbReference>
<dbReference type="Pfam" id="PF03114">
    <property type="entry name" value="BAR"/>
    <property type="match status" value="1"/>
</dbReference>
<dbReference type="Pfam" id="PF00018">
    <property type="entry name" value="SH3_1"/>
    <property type="match status" value="1"/>
</dbReference>
<dbReference type="PRINTS" id="PR00499">
    <property type="entry name" value="P67PHOX"/>
</dbReference>
<dbReference type="PRINTS" id="PR00452">
    <property type="entry name" value="SH3DOMAIN"/>
</dbReference>
<dbReference type="SMART" id="SM00721">
    <property type="entry name" value="BAR"/>
    <property type="match status" value="1"/>
</dbReference>
<dbReference type="SMART" id="SM00326">
    <property type="entry name" value="SH3"/>
    <property type="match status" value="1"/>
</dbReference>
<dbReference type="SUPFAM" id="SSF103657">
    <property type="entry name" value="BAR/IMD domain-like"/>
    <property type="match status" value="1"/>
</dbReference>
<dbReference type="SUPFAM" id="SSF50044">
    <property type="entry name" value="SH3-domain"/>
    <property type="match status" value="1"/>
</dbReference>
<dbReference type="PROSITE" id="PS51021">
    <property type="entry name" value="BAR"/>
    <property type="match status" value="1"/>
</dbReference>
<dbReference type="PROSITE" id="PS50002">
    <property type="entry name" value="SH3"/>
    <property type="match status" value="1"/>
</dbReference>
<accession>Q99961</accession>
<accession>B4DRA1</accession>
<accession>E7EVZ4</accession>
<accession>M0QZV5</accession>
<accession>Q99668</accession>
<proteinExistence type="evidence at protein level"/>
<evidence type="ECO:0000250" key="1"/>
<evidence type="ECO:0000250" key="2">
    <source>
        <dbReference type="UniProtKB" id="Q62419"/>
    </source>
</evidence>
<evidence type="ECO:0000255" key="3"/>
<evidence type="ECO:0000255" key="4">
    <source>
        <dbReference type="PROSITE-ProRule" id="PRU00192"/>
    </source>
</evidence>
<evidence type="ECO:0000255" key="5">
    <source>
        <dbReference type="PROSITE-ProRule" id="PRU00361"/>
    </source>
</evidence>
<evidence type="ECO:0000256" key="6">
    <source>
        <dbReference type="SAM" id="MobiDB-lite"/>
    </source>
</evidence>
<evidence type="ECO:0000269" key="7">
    <source>
    </source>
</evidence>
<evidence type="ECO:0000269" key="8">
    <source>
    </source>
</evidence>
<evidence type="ECO:0000269" key="9">
    <source>
    </source>
</evidence>
<evidence type="ECO:0000269" key="10">
    <source>
    </source>
</evidence>
<evidence type="ECO:0000303" key="11">
    <source>
    </source>
</evidence>
<evidence type="ECO:0000305" key="12"/>
<evidence type="ECO:0007744" key="13">
    <source>
    </source>
</evidence>
<evidence type="ECO:0007744" key="14">
    <source>
    </source>
</evidence>
<evidence type="ECO:0007744" key="15">
    <source>
    </source>
</evidence>
<evidence type="ECO:0007744" key="16">
    <source>
    </source>
</evidence>
<evidence type="ECO:0007744" key="17">
    <source>
    </source>
</evidence>
<gene>
    <name type="primary">SH3GL1</name>
    <name type="synonym">CNSA1</name>
    <name type="synonym">SH3D2B</name>
</gene>
<feature type="chain" id="PRO_0000146744" description="Endophilin-A2">
    <location>
        <begin position="1"/>
        <end position="368"/>
    </location>
</feature>
<feature type="domain" description="BAR" evidence="5">
    <location>
        <begin position="18"/>
        <end position="249"/>
    </location>
</feature>
<feature type="domain" description="SH3" evidence="4">
    <location>
        <begin position="306"/>
        <end position="365"/>
    </location>
</feature>
<feature type="region of interest" description="Membrane-binding amphipathic helix" evidence="1">
    <location>
        <begin position="1"/>
        <end position="21"/>
    </location>
</feature>
<feature type="region of interest" description="Required for dimerization upon membrane association" evidence="1">
    <location>
        <begin position="60"/>
        <end position="87"/>
    </location>
</feature>
<feature type="region of interest" description="Interaction with ARC" evidence="1">
    <location>
        <begin position="218"/>
        <end position="254"/>
    </location>
</feature>
<feature type="region of interest" description="Disordered" evidence="6">
    <location>
        <begin position="244"/>
        <end position="308"/>
    </location>
</feature>
<feature type="coiled-coil region" evidence="3">
    <location>
        <begin position="145"/>
        <end position="250"/>
    </location>
</feature>
<feature type="compositionally biased region" description="Basic and acidic residues" evidence="6">
    <location>
        <begin position="245"/>
        <end position="263"/>
    </location>
</feature>
<feature type="site" description="Breakpoint for translocation to form KMT2A/MLL1-EEN oncogene">
    <location>
        <begin position="15"/>
        <end position="16"/>
    </location>
</feature>
<feature type="modified residue" description="Phosphoserine" evidence="13 14 15 16 17">
    <location>
        <position position="288"/>
    </location>
</feature>
<feature type="modified residue" description="Phosphoserine" evidence="16">
    <location>
        <position position="292"/>
    </location>
</feature>
<feature type="modified residue" description="Phosphothreonine" evidence="16">
    <location>
        <position position="298"/>
    </location>
</feature>
<feature type="modified residue" description="Phosphotyrosine" evidence="2">
    <location>
        <position position="315"/>
    </location>
</feature>
<feature type="splice variant" id="VSP_045837" description="In isoform 2." evidence="11">
    <location>
        <begin position="63"/>
        <end position="110"/>
    </location>
</feature>
<feature type="splice variant" id="VSP_047037" description="In isoform 3." evidence="11">
    <location>
        <begin position="80"/>
        <end position="143"/>
    </location>
</feature>
<feature type="sequence conflict" description="In Ref. 5; BAG61213." evidence="12" ref="5">
    <original>D</original>
    <variation>G</variation>
    <location>
        <position position="316"/>
    </location>
</feature>